<name>RS10_THEON</name>
<protein>
    <recommendedName>
        <fullName evidence="1">Small ribosomal subunit protein uS10</fullName>
    </recommendedName>
    <alternativeName>
        <fullName evidence="2">30S ribosomal protein S10</fullName>
    </alternativeName>
</protein>
<accession>B6YVG1</accession>
<organism>
    <name type="scientific">Thermococcus onnurineus (strain NA1)</name>
    <dbReference type="NCBI Taxonomy" id="523850"/>
    <lineage>
        <taxon>Archaea</taxon>
        <taxon>Methanobacteriati</taxon>
        <taxon>Methanobacteriota</taxon>
        <taxon>Thermococci</taxon>
        <taxon>Thermococcales</taxon>
        <taxon>Thermococcaceae</taxon>
        <taxon>Thermococcus</taxon>
    </lineage>
</organism>
<comment type="function">
    <text evidence="1">Involved in the binding of tRNA to the ribosomes.</text>
</comment>
<comment type="subunit">
    <text evidence="1">Part of the 30S ribosomal subunit.</text>
</comment>
<comment type="similarity">
    <text evidence="1">Belongs to the universal ribosomal protein uS10 family.</text>
</comment>
<proteinExistence type="inferred from homology"/>
<reference key="1">
    <citation type="journal article" date="2008" name="J. Bacteriol.">
        <title>The complete genome sequence of Thermococcus onnurineus NA1 reveals a mixed heterotrophic and carboxydotrophic metabolism.</title>
        <authorList>
            <person name="Lee H.S."/>
            <person name="Kang S.G."/>
            <person name="Bae S.S."/>
            <person name="Lim J.K."/>
            <person name="Cho Y."/>
            <person name="Kim Y.J."/>
            <person name="Jeon J.H."/>
            <person name="Cha S.-S."/>
            <person name="Kwon K.K."/>
            <person name="Kim H.-T."/>
            <person name="Park C.-J."/>
            <person name="Lee H.-W."/>
            <person name="Kim S.I."/>
            <person name="Chun J."/>
            <person name="Colwell R.R."/>
            <person name="Kim S.-J."/>
            <person name="Lee J.-H."/>
        </authorList>
    </citation>
    <scope>NUCLEOTIDE SEQUENCE [LARGE SCALE GENOMIC DNA]</scope>
    <source>
        <strain>NA1</strain>
    </source>
</reference>
<keyword id="KW-0687">Ribonucleoprotein</keyword>
<keyword id="KW-0689">Ribosomal protein</keyword>
<sequence>MQKARIKLASTNIKALNEVTDQIKQIAERTGVRMSGPIPLPTKRIRITTRKSPDGEGTATFDRFELRVHKRLVDIEADERAMRQIMRIRVPEDVTIEIELIS</sequence>
<gene>
    <name evidence="1" type="primary">rps10</name>
    <name type="ordered locus">TON_0751</name>
</gene>
<feature type="chain" id="PRO_1000127196" description="Small ribosomal subunit protein uS10">
    <location>
        <begin position="1"/>
        <end position="102"/>
    </location>
</feature>
<dbReference type="EMBL" id="CP000855">
    <property type="protein sequence ID" value="ACJ16239.1"/>
    <property type="molecule type" value="Genomic_DNA"/>
</dbReference>
<dbReference type="RefSeq" id="WP_012571711.1">
    <property type="nucleotide sequence ID" value="NC_011529.1"/>
</dbReference>
<dbReference type="SMR" id="B6YVG1"/>
<dbReference type="STRING" id="523850.TON_0751"/>
<dbReference type="GeneID" id="40475281"/>
<dbReference type="KEGG" id="ton:TON_0751"/>
<dbReference type="PATRIC" id="fig|523850.10.peg.755"/>
<dbReference type="eggNOG" id="arCOG01758">
    <property type="taxonomic scope" value="Archaea"/>
</dbReference>
<dbReference type="HOGENOM" id="CLU_122625_0_1_2"/>
<dbReference type="OrthoDB" id="371736at2157"/>
<dbReference type="Proteomes" id="UP000002727">
    <property type="component" value="Chromosome"/>
</dbReference>
<dbReference type="GO" id="GO:0015935">
    <property type="term" value="C:small ribosomal subunit"/>
    <property type="evidence" value="ECO:0007669"/>
    <property type="project" value="InterPro"/>
</dbReference>
<dbReference type="GO" id="GO:0003735">
    <property type="term" value="F:structural constituent of ribosome"/>
    <property type="evidence" value="ECO:0007669"/>
    <property type="project" value="InterPro"/>
</dbReference>
<dbReference type="GO" id="GO:0000049">
    <property type="term" value="F:tRNA binding"/>
    <property type="evidence" value="ECO:0007669"/>
    <property type="project" value="UniProtKB-UniRule"/>
</dbReference>
<dbReference type="GO" id="GO:0006412">
    <property type="term" value="P:translation"/>
    <property type="evidence" value="ECO:0007669"/>
    <property type="project" value="UniProtKB-UniRule"/>
</dbReference>
<dbReference type="FunFam" id="3.30.70.600:FF:000004">
    <property type="entry name" value="30S ribosomal protein S10"/>
    <property type="match status" value="1"/>
</dbReference>
<dbReference type="Gene3D" id="3.30.70.600">
    <property type="entry name" value="Ribosomal protein S10 domain"/>
    <property type="match status" value="1"/>
</dbReference>
<dbReference type="HAMAP" id="MF_00508">
    <property type="entry name" value="Ribosomal_uS10"/>
    <property type="match status" value="1"/>
</dbReference>
<dbReference type="InterPro" id="IPR001848">
    <property type="entry name" value="Ribosomal_uS10"/>
</dbReference>
<dbReference type="InterPro" id="IPR018268">
    <property type="entry name" value="Ribosomal_uS10_CS"/>
</dbReference>
<dbReference type="InterPro" id="IPR027486">
    <property type="entry name" value="Ribosomal_uS10_dom"/>
</dbReference>
<dbReference type="InterPro" id="IPR036838">
    <property type="entry name" value="Ribosomal_uS10_dom_sf"/>
</dbReference>
<dbReference type="InterPro" id="IPR005729">
    <property type="entry name" value="Ribosomal_uS10_euk/arc"/>
</dbReference>
<dbReference type="NCBIfam" id="TIGR01046">
    <property type="entry name" value="uS10_euk_arch"/>
    <property type="match status" value="1"/>
</dbReference>
<dbReference type="PANTHER" id="PTHR11700">
    <property type="entry name" value="30S RIBOSOMAL PROTEIN S10 FAMILY MEMBER"/>
    <property type="match status" value="1"/>
</dbReference>
<dbReference type="Pfam" id="PF00338">
    <property type="entry name" value="Ribosomal_S10"/>
    <property type="match status" value="1"/>
</dbReference>
<dbReference type="PRINTS" id="PR00971">
    <property type="entry name" value="RIBOSOMALS10"/>
</dbReference>
<dbReference type="SMART" id="SM01403">
    <property type="entry name" value="Ribosomal_S10"/>
    <property type="match status" value="1"/>
</dbReference>
<dbReference type="SUPFAM" id="SSF54999">
    <property type="entry name" value="Ribosomal protein S10"/>
    <property type="match status" value="1"/>
</dbReference>
<dbReference type="PROSITE" id="PS00361">
    <property type="entry name" value="RIBOSOMAL_S10"/>
    <property type="match status" value="1"/>
</dbReference>
<evidence type="ECO:0000255" key="1">
    <source>
        <dbReference type="HAMAP-Rule" id="MF_00508"/>
    </source>
</evidence>
<evidence type="ECO:0000305" key="2"/>